<gene>
    <name evidence="1" type="primary">proS</name>
    <name type="ordered locus">SDY_0213</name>
</gene>
<comment type="function">
    <text evidence="1">Catalyzes the attachment of proline to tRNA(Pro) in a two-step reaction: proline is first activated by ATP to form Pro-AMP and then transferred to the acceptor end of tRNA(Pro). As ProRS can inadvertently accommodate and process non-cognate amino acids such as alanine and cysteine, to avoid such errors it has two additional distinct editing activities against alanine. One activity is designated as 'pretransfer' editing and involves the tRNA(Pro)-independent hydrolysis of activated Ala-AMP. The other activity is designated 'posttransfer' editing and involves deacylation of mischarged Ala-tRNA(Pro). The misacylated Cys-tRNA(Pro) is not edited by ProRS.</text>
</comment>
<comment type="catalytic activity">
    <reaction evidence="1">
        <text>tRNA(Pro) + L-proline + ATP = L-prolyl-tRNA(Pro) + AMP + diphosphate</text>
        <dbReference type="Rhea" id="RHEA:14305"/>
        <dbReference type="Rhea" id="RHEA-COMP:9700"/>
        <dbReference type="Rhea" id="RHEA-COMP:9702"/>
        <dbReference type="ChEBI" id="CHEBI:30616"/>
        <dbReference type="ChEBI" id="CHEBI:33019"/>
        <dbReference type="ChEBI" id="CHEBI:60039"/>
        <dbReference type="ChEBI" id="CHEBI:78442"/>
        <dbReference type="ChEBI" id="CHEBI:78532"/>
        <dbReference type="ChEBI" id="CHEBI:456215"/>
        <dbReference type="EC" id="6.1.1.15"/>
    </reaction>
</comment>
<comment type="subunit">
    <text evidence="1">Homodimer.</text>
</comment>
<comment type="subcellular location">
    <subcellularLocation>
        <location evidence="1">Cytoplasm</location>
    </subcellularLocation>
</comment>
<comment type="domain">
    <text evidence="1">Consists of three domains: the N-terminal catalytic domain, the editing domain and the C-terminal anticodon-binding domain.</text>
</comment>
<comment type="similarity">
    <text evidence="1">Belongs to the class-II aminoacyl-tRNA synthetase family. ProS type 1 subfamily.</text>
</comment>
<dbReference type="EC" id="6.1.1.15" evidence="1"/>
<dbReference type="EMBL" id="CP000034">
    <property type="protein sequence ID" value="ABB60444.1"/>
    <property type="molecule type" value="Genomic_DNA"/>
</dbReference>
<dbReference type="RefSeq" id="WP_001260719.1">
    <property type="nucleotide sequence ID" value="NC_007606.1"/>
</dbReference>
<dbReference type="RefSeq" id="YP_401933.1">
    <property type="nucleotide sequence ID" value="NC_007606.1"/>
</dbReference>
<dbReference type="SMR" id="Q32JR3"/>
<dbReference type="STRING" id="300267.SDY_0213"/>
<dbReference type="EnsemblBacteria" id="ABB60444">
    <property type="protein sequence ID" value="ABB60444"/>
    <property type="gene ID" value="SDY_0213"/>
</dbReference>
<dbReference type="KEGG" id="sdy:SDY_0213"/>
<dbReference type="PATRIC" id="fig|300267.13.peg.247"/>
<dbReference type="HOGENOM" id="CLU_016739_0_0_6"/>
<dbReference type="Proteomes" id="UP000002716">
    <property type="component" value="Chromosome"/>
</dbReference>
<dbReference type="GO" id="GO:0005829">
    <property type="term" value="C:cytosol"/>
    <property type="evidence" value="ECO:0007669"/>
    <property type="project" value="TreeGrafter"/>
</dbReference>
<dbReference type="GO" id="GO:0002161">
    <property type="term" value="F:aminoacyl-tRNA deacylase activity"/>
    <property type="evidence" value="ECO:0007669"/>
    <property type="project" value="InterPro"/>
</dbReference>
<dbReference type="GO" id="GO:0005524">
    <property type="term" value="F:ATP binding"/>
    <property type="evidence" value="ECO:0007669"/>
    <property type="project" value="UniProtKB-UniRule"/>
</dbReference>
<dbReference type="GO" id="GO:0004827">
    <property type="term" value="F:proline-tRNA ligase activity"/>
    <property type="evidence" value="ECO:0007669"/>
    <property type="project" value="UniProtKB-UniRule"/>
</dbReference>
<dbReference type="GO" id="GO:0006433">
    <property type="term" value="P:prolyl-tRNA aminoacylation"/>
    <property type="evidence" value="ECO:0007669"/>
    <property type="project" value="UniProtKB-UniRule"/>
</dbReference>
<dbReference type="CDD" id="cd04334">
    <property type="entry name" value="ProRS-INS"/>
    <property type="match status" value="1"/>
</dbReference>
<dbReference type="CDD" id="cd00861">
    <property type="entry name" value="ProRS_anticodon_short"/>
    <property type="match status" value="1"/>
</dbReference>
<dbReference type="CDD" id="cd00779">
    <property type="entry name" value="ProRS_core_prok"/>
    <property type="match status" value="1"/>
</dbReference>
<dbReference type="FunFam" id="3.30.930.10:FF:000012">
    <property type="entry name" value="Proline--tRNA ligase"/>
    <property type="match status" value="1"/>
</dbReference>
<dbReference type="FunFam" id="3.30.930.10:FF:000097">
    <property type="entry name" value="Proline--tRNA ligase"/>
    <property type="match status" value="1"/>
</dbReference>
<dbReference type="FunFam" id="3.40.50.800:FF:000006">
    <property type="entry name" value="Proline--tRNA ligase"/>
    <property type="match status" value="1"/>
</dbReference>
<dbReference type="FunFam" id="3.90.960.10:FF:000001">
    <property type="entry name" value="Proline--tRNA ligase"/>
    <property type="match status" value="1"/>
</dbReference>
<dbReference type="Gene3D" id="3.40.50.800">
    <property type="entry name" value="Anticodon-binding domain"/>
    <property type="match status" value="1"/>
</dbReference>
<dbReference type="Gene3D" id="3.30.930.10">
    <property type="entry name" value="Bira Bifunctional Protein, Domain 2"/>
    <property type="match status" value="2"/>
</dbReference>
<dbReference type="Gene3D" id="3.90.960.10">
    <property type="entry name" value="YbaK/aminoacyl-tRNA synthetase-associated domain"/>
    <property type="match status" value="1"/>
</dbReference>
<dbReference type="HAMAP" id="MF_01569">
    <property type="entry name" value="Pro_tRNA_synth_type1"/>
    <property type="match status" value="1"/>
</dbReference>
<dbReference type="InterPro" id="IPR002314">
    <property type="entry name" value="aa-tRNA-synt_IIb"/>
</dbReference>
<dbReference type="InterPro" id="IPR006195">
    <property type="entry name" value="aa-tRNA-synth_II"/>
</dbReference>
<dbReference type="InterPro" id="IPR045864">
    <property type="entry name" value="aa-tRNA-synth_II/BPL/LPL"/>
</dbReference>
<dbReference type="InterPro" id="IPR004154">
    <property type="entry name" value="Anticodon-bd"/>
</dbReference>
<dbReference type="InterPro" id="IPR036621">
    <property type="entry name" value="Anticodon-bd_dom_sf"/>
</dbReference>
<dbReference type="InterPro" id="IPR002316">
    <property type="entry name" value="Pro-tRNA-ligase_IIa"/>
</dbReference>
<dbReference type="InterPro" id="IPR004500">
    <property type="entry name" value="Pro-tRNA-synth_IIa_bac-type"/>
</dbReference>
<dbReference type="InterPro" id="IPR023717">
    <property type="entry name" value="Pro-tRNA-Synthase_IIa_type1"/>
</dbReference>
<dbReference type="InterPro" id="IPR050062">
    <property type="entry name" value="Pro-tRNA_synthetase"/>
</dbReference>
<dbReference type="InterPro" id="IPR044140">
    <property type="entry name" value="ProRS_anticodon_short"/>
</dbReference>
<dbReference type="InterPro" id="IPR033730">
    <property type="entry name" value="ProRS_core_prok"/>
</dbReference>
<dbReference type="InterPro" id="IPR036754">
    <property type="entry name" value="YbaK/aa-tRNA-synt-asso_dom_sf"/>
</dbReference>
<dbReference type="InterPro" id="IPR007214">
    <property type="entry name" value="YbaK/aa-tRNA-synth-assoc-dom"/>
</dbReference>
<dbReference type="NCBIfam" id="NF006625">
    <property type="entry name" value="PRK09194.1"/>
    <property type="match status" value="1"/>
</dbReference>
<dbReference type="NCBIfam" id="TIGR00409">
    <property type="entry name" value="proS_fam_II"/>
    <property type="match status" value="1"/>
</dbReference>
<dbReference type="PANTHER" id="PTHR42753">
    <property type="entry name" value="MITOCHONDRIAL RIBOSOME PROTEIN L39/PROLYL-TRNA LIGASE FAMILY MEMBER"/>
    <property type="match status" value="1"/>
</dbReference>
<dbReference type="PANTHER" id="PTHR42753:SF2">
    <property type="entry name" value="PROLINE--TRNA LIGASE"/>
    <property type="match status" value="1"/>
</dbReference>
<dbReference type="Pfam" id="PF03129">
    <property type="entry name" value="HGTP_anticodon"/>
    <property type="match status" value="1"/>
</dbReference>
<dbReference type="Pfam" id="PF00587">
    <property type="entry name" value="tRNA-synt_2b"/>
    <property type="match status" value="1"/>
</dbReference>
<dbReference type="Pfam" id="PF04073">
    <property type="entry name" value="tRNA_edit"/>
    <property type="match status" value="1"/>
</dbReference>
<dbReference type="PIRSF" id="PIRSF001535">
    <property type="entry name" value="ProRS_1"/>
    <property type="match status" value="1"/>
</dbReference>
<dbReference type="PRINTS" id="PR01046">
    <property type="entry name" value="TRNASYNTHPRO"/>
</dbReference>
<dbReference type="SUPFAM" id="SSF52954">
    <property type="entry name" value="Class II aaRS ABD-related"/>
    <property type="match status" value="1"/>
</dbReference>
<dbReference type="SUPFAM" id="SSF55681">
    <property type="entry name" value="Class II aaRS and biotin synthetases"/>
    <property type="match status" value="1"/>
</dbReference>
<dbReference type="SUPFAM" id="SSF55826">
    <property type="entry name" value="YbaK/ProRS associated domain"/>
    <property type="match status" value="1"/>
</dbReference>
<dbReference type="PROSITE" id="PS50862">
    <property type="entry name" value="AA_TRNA_LIGASE_II"/>
    <property type="match status" value="1"/>
</dbReference>
<evidence type="ECO:0000255" key="1">
    <source>
        <dbReference type="HAMAP-Rule" id="MF_01569"/>
    </source>
</evidence>
<proteinExistence type="inferred from homology"/>
<reference key="1">
    <citation type="journal article" date="2005" name="Nucleic Acids Res.">
        <title>Genome dynamics and diversity of Shigella species, the etiologic agents of bacillary dysentery.</title>
        <authorList>
            <person name="Yang F."/>
            <person name="Yang J."/>
            <person name="Zhang X."/>
            <person name="Chen L."/>
            <person name="Jiang Y."/>
            <person name="Yan Y."/>
            <person name="Tang X."/>
            <person name="Wang J."/>
            <person name="Xiong Z."/>
            <person name="Dong J."/>
            <person name="Xue Y."/>
            <person name="Zhu Y."/>
            <person name="Xu X."/>
            <person name="Sun L."/>
            <person name="Chen S."/>
            <person name="Nie H."/>
            <person name="Peng J."/>
            <person name="Xu J."/>
            <person name="Wang Y."/>
            <person name="Yuan Z."/>
            <person name="Wen Y."/>
            <person name="Yao Z."/>
            <person name="Shen Y."/>
            <person name="Qiang B."/>
            <person name="Hou Y."/>
            <person name="Yu J."/>
            <person name="Jin Q."/>
        </authorList>
    </citation>
    <scope>NUCLEOTIDE SEQUENCE [LARGE SCALE GENOMIC DNA]</scope>
    <source>
        <strain>Sd197</strain>
    </source>
</reference>
<sequence>MRTSQYLLSTLKETPADAEVISHQLMLRAGMIRKLASGLYTWLPTGVRVLKKVENIVREEMNNAGAIEVSMPVVQPADLWQESGRWEQYGPELLRFVDRGERPFVLGPTHEEVITDLIRNELSSYKQLPLNFYQIQTKFRDEVRPRFGVMRSREFLMKDAYSFHTSQESLQETYDAMYAAYSKIFSRMGLDFRAVQADTGSIGGSASHEFQVLAQSGEDDVVFSDTSDYAANIELAEAIAPKEPRAAATQEMTLVDTPNAKTIAELVEQFNLPIKKTVKTLLVKAVEGSSFPLVALLVRGDHELNEVKAEKLPQVASPLTFATEEEIRAVVKAGPGSLGPVNMPIPVVIDRIVAAMSDFAAGANIDGKHYFGINWDRDVATPEVADIRNVVAGDPSPDGQGTLLIKRGIEVGHIFQLGTKYSEALKASVQGEDGRNQILTMGCYGIGVTRVVAAAIEQNYDERGIVWPDAIAPFQVAILPMNMHKSFRVQELAEKLYSELRAQGIEVLLDDRKERPGVMFADMELIGIPHTIVLGDRNLDNDDIEYKYRRNGEKQLIKTGDIVEYLVKQIKG</sequence>
<accession>Q32JR3</accession>
<keyword id="KW-0030">Aminoacyl-tRNA synthetase</keyword>
<keyword id="KW-0067">ATP-binding</keyword>
<keyword id="KW-0963">Cytoplasm</keyword>
<keyword id="KW-0436">Ligase</keyword>
<keyword id="KW-0547">Nucleotide-binding</keyword>
<keyword id="KW-0648">Protein biosynthesis</keyword>
<keyword id="KW-1185">Reference proteome</keyword>
<organism>
    <name type="scientific">Shigella dysenteriae serotype 1 (strain Sd197)</name>
    <dbReference type="NCBI Taxonomy" id="300267"/>
    <lineage>
        <taxon>Bacteria</taxon>
        <taxon>Pseudomonadati</taxon>
        <taxon>Pseudomonadota</taxon>
        <taxon>Gammaproteobacteria</taxon>
        <taxon>Enterobacterales</taxon>
        <taxon>Enterobacteriaceae</taxon>
        <taxon>Shigella</taxon>
    </lineage>
</organism>
<protein>
    <recommendedName>
        <fullName evidence="1">Proline--tRNA ligase</fullName>
        <ecNumber evidence="1">6.1.1.15</ecNumber>
    </recommendedName>
    <alternativeName>
        <fullName evidence="1">Prolyl-tRNA synthetase</fullName>
        <shortName evidence="1">ProRS</shortName>
    </alternativeName>
</protein>
<name>SYP_SHIDS</name>
<feature type="chain" id="PRO_0000248764" description="Proline--tRNA ligase">
    <location>
        <begin position="1"/>
        <end position="572"/>
    </location>
</feature>